<gene>
    <name evidence="1" type="primary">rpsR</name>
    <name type="ordered locus">Amet_0034</name>
</gene>
<dbReference type="EMBL" id="CP000724">
    <property type="protein sequence ID" value="ABR46277.1"/>
    <property type="molecule type" value="Genomic_DNA"/>
</dbReference>
<dbReference type="RefSeq" id="WP_011971186.1">
    <property type="nucleotide sequence ID" value="NC_009633.1"/>
</dbReference>
<dbReference type="SMR" id="A6TJA9"/>
<dbReference type="STRING" id="293826.Amet_0034"/>
<dbReference type="KEGG" id="amt:Amet_0034"/>
<dbReference type="eggNOG" id="COG0238">
    <property type="taxonomic scope" value="Bacteria"/>
</dbReference>
<dbReference type="HOGENOM" id="CLU_148710_2_2_9"/>
<dbReference type="OrthoDB" id="9812008at2"/>
<dbReference type="Proteomes" id="UP000001572">
    <property type="component" value="Chromosome"/>
</dbReference>
<dbReference type="GO" id="GO:0022627">
    <property type="term" value="C:cytosolic small ribosomal subunit"/>
    <property type="evidence" value="ECO:0007669"/>
    <property type="project" value="TreeGrafter"/>
</dbReference>
<dbReference type="GO" id="GO:0070181">
    <property type="term" value="F:small ribosomal subunit rRNA binding"/>
    <property type="evidence" value="ECO:0007669"/>
    <property type="project" value="TreeGrafter"/>
</dbReference>
<dbReference type="GO" id="GO:0003735">
    <property type="term" value="F:structural constituent of ribosome"/>
    <property type="evidence" value="ECO:0007669"/>
    <property type="project" value="InterPro"/>
</dbReference>
<dbReference type="GO" id="GO:0006412">
    <property type="term" value="P:translation"/>
    <property type="evidence" value="ECO:0007669"/>
    <property type="project" value="UniProtKB-UniRule"/>
</dbReference>
<dbReference type="FunFam" id="4.10.640.10:FF:000004">
    <property type="entry name" value="30S ribosomal protein S18"/>
    <property type="match status" value="1"/>
</dbReference>
<dbReference type="Gene3D" id="4.10.640.10">
    <property type="entry name" value="Ribosomal protein S18"/>
    <property type="match status" value="1"/>
</dbReference>
<dbReference type="HAMAP" id="MF_00270">
    <property type="entry name" value="Ribosomal_bS18"/>
    <property type="match status" value="1"/>
</dbReference>
<dbReference type="InterPro" id="IPR001648">
    <property type="entry name" value="Ribosomal_bS18"/>
</dbReference>
<dbReference type="InterPro" id="IPR018275">
    <property type="entry name" value="Ribosomal_bS18_CS"/>
</dbReference>
<dbReference type="InterPro" id="IPR036870">
    <property type="entry name" value="Ribosomal_bS18_sf"/>
</dbReference>
<dbReference type="NCBIfam" id="TIGR00165">
    <property type="entry name" value="S18"/>
    <property type="match status" value="1"/>
</dbReference>
<dbReference type="PANTHER" id="PTHR13479">
    <property type="entry name" value="30S RIBOSOMAL PROTEIN S18"/>
    <property type="match status" value="1"/>
</dbReference>
<dbReference type="PANTHER" id="PTHR13479:SF40">
    <property type="entry name" value="SMALL RIBOSOMAL SUBUNIT PROTEIN BS18M"/>
    <property type="match status" value="1"/>
</dbReference>
<dbReference type="Pfam" id="PF01084">
    <property type="entry name" value="Ribosomal_S18"/>
    <property type="match status" value="1"/>
</dbReference>
<dbReference type="PRINTS" id="PR00974">
    <property type="entry name" value="RIBOSOMALS18"/>
</dbReference>
<dbReference type="SUPFAM" id="SSF46911">
    <property type="entry name" value="Ribosomal protein S18"/>
    <property type="match status" value="1"/>
</dbReference>
<dbReference type="PROSITE" id="PS00057">
    <property type="entry name" value="RIBOSOMAL_S18"/>
    <property type="match status" value="1"/>
</dbReference>
<sequence length="76" mass="9013">MVNRRRKKMKKKVCTFCADKSSKIDYKEVHKLKKYVTERGKILPRRISGNCAIHQRDITQAIKRSRHIALLPYTID</sequence>
<proteinExistence type="inferred from homology"/>
<comment type="function">
    <text evidence="1">Binds as a heterodimer with protein bS6 to the central domain of the 16S rRNA, where it helps stabilize the platform of the 30S subunit.</text>
</comment>
<comment type="subunit">
    <text evidence="1">Part of the 30S ribosomal subunit. Forms a tight heterodimer with protein bS6.</text>
</comment>
<comment type="similarity">
    <text evidence="1">Belongs to the bacterial ribosomal protein bS18 family.</text>
</comment>
<organism>
    <name type="scientific">Alkaliphilus metalliredigens (strain QYMF)</name>
    <dbReference type="NCBI Taxonomy" id="293826"/>
    <lineage>
        <taxon>Bacteria</taxon>
        <taxon>Bacillati</taxon>
        <taxon>Bacillota</taxon>
        <taxon>Clostridia</taxon>
        <taxon>Peptostreptococcales</taxon>
        <taxon>Natronincolaceae</taxon>
        <taxon>Alkaliphilus</taxon>
    </lineage>
</organism>
<reference key="1">
    <citation type="journal article" date="2016" name="Genome Announc.">
        <title>Complete genome sequence of Alkaliphilus metalliredigens strain QYMF, an alkaliphilic and metal-reducing bacterium isolated from borax-contaminated leachate ponds.</title>
        <authorList>
            <person name="Hwang C."/>
            <person name="Copeland A."/>
            <person name="Lucas S."/>
            <person name="Lapidus A."/>
            <person name="Barry K."/>
            <person name="Detter J.C."/>
            <person name="Glavina Del Rio T."/>
            <person name="Hammon N."/>
            <person name="Israni S."/>
            <person name="Dalin E."/>
            <person name="Tice H."/>
            <person name="Pitluck S."/>
            <person name="Chertkov O."/>
            <person name="Brettin T."/>
            <person name="Bruce D."/>
            <person name="Han C."/>
            <person name="Schmutz J."/>
            <person name="Larimer F."/>
            <person name="Land M.L."/>
            <person name="Hauser L."/>
            <person name="Kyrpides N."/>
            <person name="Mikhailova N."/>
            <person name="Ye Q."/>
            <person name="Zhou J."/>
            <person name="Richardson P."/>
            <person name="Fields M.W."/>
        </authorList>
    </citation>
    <scope>NUCLEOTIDE SEQUENCE [LARGE SCALE GENOMIC DNA]</scope>
    <source>
        <strain>QYMF</strain>
    </source>
</reference>
<name>RS18_ALKMQ</name>
<keyword id="KW-1185">Reference proteome</keyword>
<keyword id="KW-0687">Ribonucleoprotein</keyword>
<keyword id="KW-0689">Ribosomal protein</keyword>
<keyword id="KW-0694">RNA-binding</keyword>
<keyword id="KW-0699">rRNA-binding</keyword>
<accession>A6TJA9</accession>
<protein>
    <recommendedName>
        <fullName evidence="1">Small ribosomal subunit protein bS18</fullName>
    </recommendedName>
    <alternativeName>
        <fullName evidence="2">30S ribosomal protein S18</fullName>
    </alternativeName>
</protein>
<feature type="chain" id="PRO_0000345434" description="Small ribosomal subunit protein bS18">
    <location>
        <begin position="1"/>
        <end position="76"/>
    </location>
</feature>
<evidence type="ECO:0000255" key="1">
    <source>
        <dbReference type="HAMAP-Rule" id="MF_00270"/>
    </source>
</evidence>
<evidence type="ECO:0000305" key="2"/>